<proteinExistence type="evidence at transcript level"/>
<protein>
    <recommendedName>
        <fullName evidence="5">Endosomal/lysosomal proton channel TMEM175</fullName>
    </recommendedName>
    <alternativeName>
        <fullName evidence="5">Potassium channel TMEM175</fullName>
    </alternativeName>
    <alternativeName>
        <fullName evidence="2">Transmembrane protein 175</fullName>
    </alternativeName>
</protein>
<name>TM175_BOVIN</name>
<feature type="chain" id="PRO_0000282587" description="Endosomal/lysosomal proton channel TMEM175">
    <location>
        <begin position="1"/>
        <end position="479"/>
    </location>
</feature>
<feature type="topological domain" description="Cytoplasmic" evidence="2">
    <location>
        <begin position="1"/>
        <end position="33"/>
    </location>
</feature>
<feature type="transmembrane region" description="Helical; Name=TM1-1" evidence="2">
    <location>
        <begin position="34"/>
        <end position="56"/>
    </location>
</feature>
<feature type="topological domain" description="Lumenal" evidence="2">
    <location>
        <begin position="57"/>
        <end position="64"/>
    </location>
</feature>
<feature type="transmembrane region" description="Helical; Name=TM2-1" evidence="2">
    <location>
        <begin position="65"/>
        <end position="87"/>
    </location>
</feature>
<feature type="topological domain" description="Cytoplasmic" evidence="2">
    <location>
        <begin position="88"/>
        <end position="93"/>
    </location>
</feature>
<feature type="transmembrane region" description="Helical; Name=TM3-1" evidence="2">
    <location>
        <begin position="94"/>
        <end position="103"/>
    </location>
</feature>
<feature type="topological domain" description="Lumenal" evidence="2">
    <location>
        <begin position="104"/>
        <end position="113"/>
    </location>
</feature>
<feature type="transmembrane region" description="Helical; Name=TM4-1" evidence="2">
    <location>
        <begin position="114"/>
        <end position="135"/>
    </location>
</feature>
<feature type="topological domain" description="Cytoplasmic" evidence="2 5">
    <location>
        <begin position="136"/>
        <end position="159"/>
    </location>
</feature>
<feature type="transmembrane region" description="Helical; Name=TM5-1" evidence="3">
    <location>
        <begin position="160"/>
        <end position="180"/>
    </location>
</feature>
<feature type="topological domain" description="Lumenal" evidence="2">
    <location>
        <begin position="181"/>
        <end position="185"/>
    </location>
</feature>
<feature type="transmembrane region" description="Helical; Name=TM6-1" evidence="3">
    <location>
        <begin position="186"/>
        <end position="205"/>
    </location>
</feature>
<feature type="topological domain" description="Cytoplasmic" evidence="2">
    <location>
        <begin position="206"/>
        <end position="232"/>
    </location>
</feature>
<feature type="transmembrane region" description="Helical; Name=TM1-2" evidence="2">
    <location>
        <begin position="233"/>
        <end position="257"/>
    </location>
</feature>
<feature type="topological domain" description="Lumenal" evidence="2">
    <location>
        <begin position="258"/>
        <end position="284"/>
    </location>
</feature>
<feature type="transmembrane region" description="Helical; Name=TM2-2" evidence="2">
    <location>
        <begin position="285"/>
        <end position="307"/>
    </location>
</feature>
<feature type="topological domain" description="Cytoplasmic" evidence="2">
    <location>
        <begin position="308"/>
        <end position="313"/>
    </location>
</feature>
<feature type="transmembrane region" description="Helical; Name=TM3-2" evidence="2">
    <location>
        <begin position="314"/>
        <end position="335"/>
    </location>
</feature>
<feature type="topological domain" description="Lumenal" evidence="2">
    <location>
        <begin position="336"/>
        <end position="350"/>
    </location>
</feature>
<feature type="transmembrane region" description="Helical; Name=TM4-2" evidence="2">
    <location>
        <begin position="351"/>
        <end position="371"/>
    </location>
</feature>
<feature type="topological domain" description="Cytoplasmic" evidence="2">
    <location>
        <begin position="372"/>
        <end position="391"/>
    </location>
</feature>
<feature type="transmembrane region" description="Helical; Name=TM5-2" evidence="2">
    <location>
        <begin position="392"/>
        <end position="415"/>
    </location>
</feature>
<feature type="topological domain" description="Lumenal" evidence="2">
    <location>
        <begin position="416"/>
        <end position="417"/>
    </location>
</feature>
<feature type="transmembrane region" description="Helical; Name=TM6-2" evidence="2">
    <location>
        <begin position="418"/>
        <end position="444"/>
    </location>
</feature>
<feature type="topological domain" description="Cytoplasmic" evidence="2">
    <location>
        <begin position="445"/>
        <end position="479"/>
    </location>
</feature>
<feature type="region of interest" description="Disordered" evidence="4">
    <location>
        <begin position="1"/>
        <end position="26"/>
    </location>
</feature>
<feature type="region of interest" description="Short helix H2-1" evidence="1">
    <location>
        <begin position="52"/>
        <end position="58"/>
    </location>
</feature>
<feature type="region of interest" description="Short helix H1-2" evidence="1">
    <location>
        <begin position="263"/>
        <end position="271"/>
    </location>
</feature>
<feature type="region of interest" description="Short helix H2-2" evidence="1">
    <location>
        <begin position="273"/>
        <end position="279"/>
    </location>
</feature>
<feature type="short sequence motif" description="RxxxFSD motif 1" evidence="2">
    <location>
        <begin position="35"/>
        <end position="41"/>
    </location>
</feature>
<feature type="short sequence motif" description="RxxxFSD motif 2" evidence="2">
    <location>
        <begin position="235"/>
        <end position="241"/>
    </location>
</feature>
<feature type="site" description="Hydrophobic filter residue 1-1" evidence="2">
    <location>
        <position position="46"/>
    </location>
</feature>
<feature type="site" description="Hydrophobic filter residue 2-1" evidence="1">
    <location>
        <position position="50"/>
    </location>
</feature>
<feature type="site" description="Hydrophobic filter residue 1-2" evidence="2">
    <location>
        <position position="246"/>
    </location>
</feature>
<feature type="site" description="Hydrophobic filter residue 2-2" evidence="1">
    <location>
        <position position="250"/>
    </location>
</feature>
<feature type="site" description="Hydrophobic filter residue 3-2" evidence="1">
    <location>
        <position position="253"/>
    </location>
</feature>
<organism>
    <name type="scientific">Bos taurus</name>
    <name type="common">Bovine</name>
    <dbReference type="NCBI Taxonomy" id="9913"/>
    <lineage>
        <taxon>Eukaryota</taxon>
        <taxon>Metazoa</taxon>
        <taxon>Chordata</taxon>
        <taxon>Craniata</taxon>
        <taxon>Vertebrata</taxon>
        <taxon>Euteleostomi</taxon>
        <taxon>Mammalia</taxon>
        <taxon>Eutheria</taxon>
        <taxon>Laurasiatheria</taxon>
        <taxon>Artiodactyla</taxon>
        <taxon>Ruminantia</taxon>
        <taxon>Pecora</taxon>
        <taxon>Bovidae</taxon>
        <taxon>Bovinae</taxon>
        <taxon>Bos</taxon>
    </lineage>
</organism>
<dbReference type="EMBL" id="DAAA02018528">
    <property type="status" value="NOT_ANNOTATED_CDS"/>
    <property type="molecule type" value="Genomic_DNA"/>
</dbReference>
<dbReference type="EMBL" id="DAAA02018529">
    <property type="status" value="NOT_ANNOTATED_CDS"/>
    <property type="molecule type" value="Genomic_DNA"/>
</dbReference>
<dbReference type="EMBL" id="BC108122">
    <property type="protein sequence ID" value="AAI08123.1"/>
    <property type="molecule type" value="mRNA"/>
</dbReference>
<dbReference type="RefSeq" id="NP_001069081.1">
    <property type="nucleotide sequence ID" value="NM_001075613.2"/>
</dbReference>
<dbReference type="SMR" id="Q32PG7"/>
<dbReference type="FunCoup" id="Q32PG7">
    <property type="interactions" value="2364"/>
</dbReference>
<dbReference type="STRING" id="9913.ENSBTAP00000066566"/>
<dbReference type="PaxDb" id="9913-ENSBTAP00000024455"/>
<dbReference type="GeneID" id="513317"/>
<dbReference type="KEGG" id="bta:513317"/>
<dbReference type="CTD" id="84286"/>
<dbReference type="eggNOG" id="ENOG502QR5C">
    <property type="taxonomic scope" value="Eukaryota"/>
</dbReference>
<dbReference type="InParanoid" id="Q32PG7"/>
<dbReference type="OrthoDB" id="203835at2759"/>
<dbReference type="TreeFam" id="TF328838"/>
<dbReference type="Proteomes" id="UP000009136">
    <property type="component" value="Unplaced"/>
</dbReference>
<dbReference type="GO" id="GO:0005768">
    <property type="term" value="C:endosome"/>
    <property type="evidence" value="ECO:0000250"/>
    <property type="project" value="UniProtKB"/>
</dbReference>
<dbReference type="GO" id="GO:0010008">
    <property type="term" value="C:endosome membrane"/>
    <property type="evidence" value="ECO:0000250"/>
    <property type="project" value="UniProtKB"/>
</dbReference>
<dbReference type="GO" id="GO:0005765">
    <property type="term" value="C:lysosomal membrane"/>
    <property type="evidence" value="ECO:0000250"/>
    <property type="project" value="UniProtKB"/>
</dbReference>
<dbReference type="GO" id="GO:0005764">
    <property type="term" value="C:lysosome"/>
    <property type="evidence" value="ECO:0000250"/>
    <property type="project" value="UniProtKB"/>
</dbReference>
<dbReference type="GO" id="GO:0050544">
    <property type="term" value="F:arachidonate binding"/>
    <property type="evidence" value="ECO:0000250"/>
    <property type="project" value="UniProtKB"/>
</dbReference>
<dbReference type="GO" id="GO:0005267">
    <property type="term" value="F:potassium channel activity"/>
    <property type="evidence" value="ECO:0000250"/>
    <property type="project" value="UniProtKB"/>
</dbReference>
<dbReference type="GO" id="GO:0022841">
    <property type="term" value="F:potassium ion leak channel activity"/>
    <property type="evidence" value="ECO:0000250"/>
    <property type="project" value="UniProtKB"/>
</dbReference>
<dbReference type="GO" id="GO:0015252">
    <property type="term" value="F:proton channel activity"/>
    <property type="evidence" value="ECO:0000250"/>
    <property type="project" value="UniProtKB"/>
</dbReference>
<dbReference type="GO" id="GO:0035752">
    <property type="term" value="P:lysosomal lumen pH elevation"/>
    <property type="evidence" value="ECO:0000250"/>
    <property type="project" value="UniProtKB"/>
</dbReference>
<dbReference type="GO" id="GO:0070050">
    <property type="term" value="P:neuron cellular homeostasis"/>
    <property type="evidence" value="ECO:0000250"/>
    <property type="project" value="UniProtKB"/>
</dbReference>
<dbReference type="GO" id="GO:0090385">
    <property type="term" value="P:phagosome-lysosome fusion"/>
    <property type="evidence" value="ECO:0000250"/>
    <property type="project" value="UniProtKB"/>
</dbReference>
<dbReference type="GO" id="GO:0071805">
    <property type="term" value="P:potassium ion transmembrane transport"/>
    <property type="evidence" value="ECO:0000250"/>
    <property type="project" value="UniProtKB"/>
</dbReference>
<dbReference type="GO" id="GO:1902600">
    <property type="term" value="P:proton transmembrane transport"/>
    <property type="evidence" value="ECO:0000250"/>
    <property type="project" value="UniProtKB"/>
</dbReference>
<dbReference type="GO" id="GO:0035751">
    <property type="term" value="P:regulation of lysosomal lumen pH"/>
    <property type="evidence" value="ECO:0000250"/>
    <property type="project" value="UniProtKB"/>
</dbReference>
<dbReference type="InterPro" id="IPR010617">
    <property type="entry name" value="TMEM175-like"/>
</dbReference>
<dbReference type="PANTHER" id="PTHR31462">
    <property type="entry name" value="ENDOSOMAL/LYSOSOMAL POTASSIUM CHANNEL TMEM175"/>
    <property type="match status" value="1"/>
</dbReference>
<dbReference type="PANTHER" id="PTHR31462:SF5">
    <property type="entry name" value="ENDOSOMAL_LYSOSOMAL PROTON CHANNEL TMEM175"/>
    <property type="match status" value="1"/>
</dbReference>
<dbReference type="Pfam" id="PF06736">
    <property type="entry name" value="TMEM175"/>
    <property type="match status" value="2"/>
</dbReference>
<reference key="1">
    <citation type="journal article" date="2009" name="Genome Biol.">
        <title>A whole-genome assembly of the domestic cow, Bos taurus.</title>
        <authorList>
            <person name="Zimin A.V."/>
            <person name="Delcher A.L."/>
            <person name="Florea L."/>
            <person name="Kelley D.R."/>
            <person name="Schatz M.C."/>
            <person name="Puiu D."/>
            <person name="Hanrahan F."/>
            <person name="Pertea G."/>
            <person name="Van Tassell C.P."/>
            <person name="Sonstegard T.S."/>
            <person name="Marcais G."/>
            <person name="Roberts M."/>
            <person name="Subramanian P."/>
            <person name="Yorke J.A."/>
            <person name="Salzberg S.L."/>
        </authorList>
    </citation>
    <scope>NUCLEOTIDE SEQUENCE [LARGE SCALE GENOMIC DNA]</scope>
    <source>
        <strain>Hereford</strain>
    </source>
</reference>
<reference key="2">
    <citation type="submission" date="2005-10" db="EMBL/GenBank/DDBJ databases">
        <authorList>
            <consortium name="NIH - Mammalian Gene Collection (MGC) project"/>
        </authorList>
    </citation>
    <scope>NUCLEOTIDE SEQUENCE [LARGE SCALE MRNA]</scope>
    <source>
        <strain>Hereford</strain>
        <tissue>Hypothalamus</tissue>
    </source>
</reference>
<keyword id="KW-0967">Endosome</keyword>
<keyword id="KW-0407">Ion channel</keyword>
<keyword id="KW-0406">Ion transport</keyword>
<keyword id="KW-0458">Lysosome</keyword>
<keyword id="KW-0472">Membrane</keyword>
<keyword id="KW-0630">Potassium</keyword>
<keyword id="KW-0631">Potassium channel</keyword>
<keyword id="KW-0633">Potassium transport</keyword>
<keyword id="KW-1185">Reference proteome</keyword>
<keyword id="KW-0812">Transmembrane</keyword>
<keyword id="KW-1133">Transmembrane helix</keyword>
<keyword id="KW-0813">Transport</keyword>
<sequence>MSGPQAPEPTLEGQADASAGSPDEDAAEGIQHSHRMLSFSDALLSIIATVMEFDKSVQRLLATRIAVYLMTFLIVTVAWAAHTRLFQVVGKIDDTLALLNLFSLMVTFPEVPLGIFLFCMCVIAIGAVQALIVLYAFHFPHLLSPQIERSAHRGLYRQRVLGIIVRGPALCLAAAGFSLFFYPASYLLMAMVIVLPHVSKAAGWCRAQLVGPREPPAHSVEVFTFDLHEPLSKERVEAFSDGVYAIVATLLILDICEDNVPDAKDVKEKFQGSLVAALGESGPHFLAYFGSFATVGLLWFAHHSLFLHIRRATQPMGLLNTLSLAFVGGLPLAYQQTSAFTKQPRDELESVRISCAIIFLASIFQFAIWTTALLQEGETLQPSARFGGREHAFMFAKLALYPCASLLAFACTCVLSSFSTAIFHAMQIAVPFAFLLLRLLVRLALAGLRALRGLVGPVLARPAPGAADEAQSPLLPAPC</sequence>
<accession>Q32PG7</accession>
<accession>F1ME05</accession>
<gene>
    <name evidence="2" type="primary">TMEM175</name>
</gene>
<evidence type="ECO:0000250" key="1">
    <source>
        <dbReference type="UniProtKB" id="K9UJK2"/>
    </source>
</evidence>
<evidence type="ECO:0000250" key="2">
    <source>
        <dbReference type="UniProtKB" id="Q9BSA9"/>
    </source>
</evidence>
<evidence type="ECO:0000255" key="3"/>
<evidence type="ECO:0000256" key="4">
    <source>
        <dbReference type="SAM" id="MobiDB-lite"/>
    </source>
</evidence>
<evidence type="ECO:0000305" key="5"/>
<comment type="function">
    <text evidence="2">Proton-activated proton channel that catalyzes proton efflux from endosomes and lysosomes to maintain a steady-state pH. Activated at low pH (under pH 4.6) by luminal side protons: selectively mediates lysosomal proton release from lysosomes, eliciting a proton leak that balances V-ATPase activity to maintain pH homeostasis. Regulation of lumenal pH stability is required for autophagosome-lysosome fusion. Also acts as a potassium channel at higher pH, regulating potassium conductance in endosomes and lysosomes. Constitutes the pore-forming subunit of the lysoK(GF) complex, a complex activated by extracellular growth factors. The lysoK(GF) complex is composed of TMEM175 and AKT (AKT1, AKT2 or AKT3), a major target of growth factor receptors: in the complex, TMEM175 channel is opened by conformational changes by AKT, leading to its activation. The lysoK(GF) complex is required to protect neurons against stress-induced damage.</text>
</comment>
<comment type="catalytic activity">
    <reaction evidence="2">
        <text>H(+)(in) = H(+)(out)</text>
        <dbReference type="Rhea" id="RHEA:34979"/>
        <dbReference type="ChEBI" id="CHEBI:15378"/>
    </reaction>
</comment>
<comment type="catalytic activity">
    <reaction evidence="2">
        <text>K(+)(in) = K(+)(out)</text>
        <dbReference type="Rhea" id="RHEA:29463"/>
        <dbReference type="ChEBI" id="CHEBI:29103"/>
    </reaction>
</comment>
<comment type="activity regulation">
    <text evidence="2">Active at low pH (under pH 4.6): proton channel activity is activated by luminal side protons. Polyunsaturated fatty acids, such as arachidonic acid, also activate the channel activity. Proton channel activity is directly inhibited by LAMP1 or LAMP2, facilitating lysosomal acidification. Channel activity is activated following interaction with AKT (AKT1, AKT2 or AKT3): interaction promotes activation from closed to an open state. Activation by AKT is independent of AKT serine/threonine-protein kinase activity.</text>
</comment>
<comment type="subunit">
    <text evidence="2">Homodimer. Interacts with AKT (AKT1, AKT2 or AKT3); leading to formation of the lysoK(GF) complex, which activates the channel. Interacts with LAMP1; inhibiting the proton channel activity of TMEM175. Interacts with LAMP2; inhibiting the proton channel activity of TMEM175.</text>
</comment>
<comment type="subcellular location">
    <subcellularLocation>
        <location evidence="2">Endosome membrane</location>
        <topology evidence="3">Multi-pass membrane protein</topology>
    </subcellularLocation>
    <subcellularLocation>
        <location evidence="2">Lysosome membrane</location>
        <topology evidence="3">Multi-pass membrane protein</topology>
    </subcellularLocation>
</comment>
<comment type="domain">
    <text evidence="2">Composed of two modules of six transmembranes, forming a homodimer with a tetrameric architecture. The six transmembrane regions of each module are tightly packed within each subunit without undergoing domain swapping. Forms a central ion-conduction pore lined by the side chains of the pore-lining helices. Conserved isoleucine residues (Ile-46 in the first module and Ile-246 in the second module) in the center of the pore serve as the gate in the closed conformation. In the widened channel in the open conformation, the same residues establish a constriction essential for potassium selectivity.</text>
</comment>
<comment type="similarity">
    <text evidence="5">Belongs to the TMEM175 family.</text>
</comment>